<feature type="chain" id="PRO_0000193901" description="Pre-mRNA-splicing factor cwf14">
    <location>
        <begin position="1"/>
        <end position="146"/>
    </location>
</feature>
<feature type="helix" evidence="3">
    <location>
        <begin position="16"/>
        <end position="35"/>
    </location>
</feature>
<feature type="helix" evidence="3">
    <location>
        <begin position="44"/>
        <end position="46"/>
    </location>
</feature>
<feature type="helix" evidence="3">
    <location>
        <begin position="47"/>
        <end position="65"/>
    </location>
</feature>
<feature type="helix" evidence="3">
    <location>
        <begin position="72"/>
        <end position="80"/>
    </location>
</feature>
<feature type="helix" evidence="3">
    <location>
        <begin position="86"/>
        <end position="92"/>
    </location>
</feature>
<feature type="turn" evidence="3">
    <location>
        <begin position="104"/>
        <end position="106"/>
    </location>
</feature>
<feature type="helix" evidence="3">
    <location>
        <begin position="108"/>
        <end position="110"/>
    </location>
</feature>
<feature type="strand" evidence="3">
    <location>
        <begin position="111"/>
        <end position="114"/>
    </location>
</feature>
<feature type="helix" evidence="3">
    <location>
        <begin position="118"/>
        <end position="120"/>
    </location>
</feature>
<feature type="helix" evidence="3">
    <location>
        <begin position="123"/>
        <end position="125"/>
    </location>
</feature>
<feature type="turn" evidence="3">
    <location>
        <begin position="135"/>
        <end position="137"/>
    </location>
</feature>
<organism>
    <name type="scientific">Schizosaccharomyces pombe (strain 972 / ATCC 24843)</name>
    <name type="common">Fission yeast</name>
    <dbReference type="NCBI Taxonomy" id="284812"/>
    <lineage>
        <taxon>Eukaryota</taxon>
        <taxon>Fungi</taxon>
        <taxon>Dikarya</taxon>
        <taxon>Ascomycota</taxon>
        <taxon>Taphrinomycotina</taxon>
        <taxon>Schizosaccharomycetes</taxon>
        <taxon>Schizosaccharomycetales</taxon>
        <taxon>Schizosaccharomycetaceae</taxon>
        <taxon>Schizosaccharomyces</taxon>
    </lineage>
</organism>
<gene>
    <name type="primary">cwf14</name>
    <name type="ORF">SPBC24C6.11</name>
</gene>
<sequence>MPRLRTSRTKRPPDGFDEIEPTLIEFQDRMRQIENTMGKGTKTEMLAPIFQLHHQRSRYIYDLYYKREAISTELYNWLLKQNYADGNLIAKWKKPGYEKLCCLRCIQTAESKFGSTCICRVPKSKLDKDQRVRCTHCGCNGCASCD</sequence>
<reference key="1">
    <citation type="journal article" date="2002" name="Nature">
        <title>The genome sequence of Schizosaccharomyces pombe.</title>
        <authorList>
            <person name="Wood V."/>
            <person name="Gwilliam R."/>
            <person name="Rajandream M.A."/>
            <person name="Lyne M.H."/>
            <person name="Lyne R."/>
            <person name="Stewart A."/>
            <person name="Sgouros J.G."/>
            <person name="Peat N."/>
            <person name="Hayles J."/>
            <person name="Baker S.G."/>
            <person name="Basham D."/>
            <person name="Bowman S."/>
            <person name="Brooks K."/>
            <person name="Brown D."/>
            <person name="Brown S."/>
            <person name="Chillingworth T."/>
            <person name="Churcher C.M."/>
            <person name="Collins M."/>
            <person name="Connor R."/>
            <person name="Cronin A."/>
            <person name="Davis P."/>
            <person name="Feltwell T."/>
            <person name="Fraser A."/>
            <person name="Gentles S."/>
            <person name="Goble A."/>
            <person name="Hamlin N."/>
            <person name="Harris D.E."/>
            <person name="Hidalgo J."/>
            <person name="Hodgson G."/>
            <person name="Holroyd S."/>
            <person name="Hornsby T."/>
            <person name="Howarth S."/>
            <person name="Huckle E.J."/>
            <person name="Hunt S."/>
            <person name="Jagels K."/>
            <person name="James K.D."/>
            <person name="Jones L."/>
            <person name="Jones M."/>
            <person name="Leather S."/>
            <person name="McDonald S."/>
            <person name="McLean J."/>
            <person name="Mooney P."/>
            <person name="Moule S."/>
            <person name="Mungall K.L."/>
            <person name="Murphy L.D."/>
            <person name="Niblett D."/>
            <person name="Odell C."/>
            <person name="Oliver K."/>
            <person name="O'Neil S."/>
            <person name="Pearson D."/>
            <person name="Quail M.A."/>
            <person name="Rabbinowitsch E."/>
            <person name="Rutherford K.M."/>
            <person name="Rutter S."/>
            <person name="Saunders D."/>
            <person name="Seeger K."/>
            <person name="Sharp S."/>
            <person name="Skelton J."/>
            <person name="Simmonds M.N."/>
            <person name="Squares R."/>
            <person name="Squares S."/>
            <person name="Stevens K."/>
            <person name="Taylor K."/>
            <person name="Taylor R.G."/>
            <person name="Tivey A."/>
            <person name="Walsh S.V."/>
            <person name="Warren T."/>
            <person name="Whitehead S."/>
            <person name="Woodward J.R."/>
            <person name="Volckaert G."/>
            <person name="Aert R."/>
            <person name="Robben J."/>
            <person name="Grymonprez B."/>
            <person name="Weltjens I."/>
            <person name="Vanstreels E."/>
            <person name="Rieger M."/>
            <person name="Schaefer M."/>
            <person name="Mueller-Auer S."/>
            <person name="Gabel C."/>
            <person name="Fuchs M."/>
            <person name="Duesterhoeft A."/>
            <person name="Fritzc C."/>
            <person name="Holzer E."/>
            <person name="Moestl D."/>
            <person name="Hilbert H."/>
            <person name="Borzym K."/>
            <person name="Langer I."/>
            <person name="Beck A."/>
            <person name="Lehrach H."/>
            <person name="Reinhardt R."/>
            <person name="Pohl T.M."/>
            <person name="Eger P."/>
            <person name="Zimmermann W."/>
            <person name="Wedler H."/>
            <person name="Wambutt R."/>
            <person name="Purnelle B."/>
            <person name="Goffeau A."/>
            <person name="Cadieu E."/>
            <person name="Dreano S."/>
            <person name="Gloux S."/>
            <person name="Lelaure V."/>
            <person name="Mottier S."/>
            <person name="Galibert F."/>
            <person name="Aves S.J."/>
            <person name="Xiang Z."/>
            <person name="Hunt C."/>
            <person name="Moore K."/>
            <person name="Hurst S.M."/>
            <person name="Lucas M."/>
            <person name="Rochet M."/>
            <person name="Gaillardin C."/>
            <person name="Tallada V.A."/>
            <person name="Garzon A."/>
            <person name="Thode G."/>
            <person name="Daga R.R."/>
            <person name="Cruzado L."/>
            <person name="Jimenez J."/>
            <person name="Sanchez M."/>
            <person name="del Rey F."/>
            <person name="Benito J."/>
            <person name="Dominguez A."/>
            <person name="Revuelta J.L."/>
            <person name="Moreno S."/>
            <person name="Armstrong J."/>
            <person name="Forsburg S.L."/>
            <person name="Cerutti L."/>
            <person name="Lowe T."/>
            <person name="McCombie W.R."/>
            <person name="Paulsen I."/>
            <person name="Potashkin J."/>
            <person name="Shpakovski G.V."/>
            <person name="Ussery D."/>
            <person name="Barrell B.G."/>
            <person name="Nurse P."/>
        </authorList>
    </citation>
    <scope>NUCLEOTIDE SEQUENCE [LARGE SCALE GENOMIC DNA]</scope>
    <source>
        <strain>972 / ATCC 24843</strain>
    </source>
</reference>
<reference key="2">
    <citation type="journal article" date="2002" name="Mol. Cell. Biol.">
        <title>Proteomics analysis reveals stable multiprotein complexes in both fission and budding yeasts containing Myb-related Cdc5p/Cef1p, novel pre-mRNA splicing factors, and snRNAs.</title>
        <authorList>
            <person name="Ohi M.D."/>
            <person name="Link A.J."/>
            <person name="Ren L."/>
            <person name="Jennings J.L."/>
            <person name="McDonald W.H."/>
            <person name="Gould K.L."/>
        </authorList>
    </citation>
    <scope>IDENTIFICATION IN THE CWF COMPLEX</scope>
    <scope>IDENTIFICATION BY MASS SPECTROMETRY</scope>
</reference>
<accession>O74772</accession>
<name>CWF14_SCHPO</name>
<dbReference type="EMBL" id="CU329671">
    <property type="protein sequence ID" value="CAA21155.1"/>
    <property type="molecule type" value="Genomic_DNA"/>
</dbReference>
<dbReference type="PIR" id="T39975">
    <property type="entry name" value="T39975"/>
</dbReference>
<dbReference type="RefSeq" id="NP_595965.1">
    <property type="nucleotide sequence ID" value="NM_001021874.2"/>
</dbReference>
<dbReference type="PDB" id="3JB9">
    <property type="method" value="EM"/>
    <property type="resolution" value="3.60 A"/>
    <property type="chains" value="e=1-146"/>
</dbReference>
<dbReference type="PDB" id="9ESH">
    <property type="method" value="EM"/>
    <property type="resolution" value="3.20 A"/>
    <property type="chains" value="O=1-146"/>
</dbReference>
<dbReference type="PDB" id="9ESI">
    <property type="method" value="EM"/>
    <property type="resolution" value="3.10 A"/>
    <property type="chains" value="O=1-146"/>
</dbReference>
<dbReference type="PDBsum" id="3JB9"/>
<dbReference type="PDBsum" id="9ESH"/>
<dbReference type="PDBsum" id="9ESI"/>
<dbReference type="EMDB" id="EMD-19941"/>
<dbReference type="EMDB" id="EMD-19942"/>
<dbReference type="SMR" id="O74772"/>
<dbReference type="BioGRID" id="276962">
    <property type="interactions" value="75"/>
</dbReference>
<dbReference type="FunCoup" id="O74772">
    <property type="interactions" value="636"/>
</dbReference>
<dbReference type="IntAct" id="O74772">
    <property type="interactions" value="4"/>
</dbReference>
<dbReference type="STRING" id="284812.O74772"/>
<dbReference type="PaxDb" id="4896-SPBC24C6.11.1"/>
<dbReference type="EnsemblFungi" id="SPBC24C6.11.1">
    <property type="protein sequence ID" value="SPBC24C6.11.1:pep"/>
    <property type="gene ID" value="SPBC24C6.11"/>
</dbReference>
<dbReference type="GeneID" id="2540434"/>
<dbReference type="KEGG" id="spo:2540434"/>
<dbReference type="PomBase" id="SPBC24C6.11">
    <property type="gene designation" value="cwf14"/>
</dbReference>
<dbReference type="VEuPathDB" id="FungiDB:SPBC24C6.11"/>
<dbReference type="eggNOG" id="KOG3404">
    <property type="taxonomic scope" value="Eukaryota"/>
</dbReference>
<dbReference type="HOGENOM" id="CLU_087132_1_1_1"/>
<dbReference type="InParanoid" id="O74772"/>
<dbReference type="OMA" id="FGTSCIC"/>
<dbReference type="PhylomeDB" id="O74772"/>
<dbReference type="Reactome" id="R-SPO-72163">
    <property type="pathway name" value="mRNA Splicing - Major Pathway"/>
</dbReference>
<dbReference type="EvolutionaryTrace" id="O74772"/>
<dbReference type="PRO" id="PR:O74772"/>
<dbReference type="Proteomes" id="UP000002485">
    <property type="component" value="Chromosome II"/>
</dbReference>
<dbReference type="GO" id="GO:0071014">
    <property type="term" value="C:post-mRNA release spliceosomal complex"/>
    <property type="evidence" value="ECO:0000314"/>
    <property type="project" value="PomBase"/>
</dbReference>
<dbReference type="GO" id="GO:0000974">
    <property type="term" value="C:Prp19 complex"/>
    <property type="evidence" value="ECO:0000314"/>
    <property type="project" value="PomBase"/>
</dbReference>
<dbReference type="GO" id="GO:0005681">
    <property type="term" value="C:spliceosomal complex"/>
    <property type="evidence" value="ECO:0000314"/>
    <property type="project" value="PomBase"/>
</dbReference>
<dbReference type="GO" id="GO:0005684">
    <property type="term" value="C:U2-type spliceosomal complex"/>
    <property type="evidence" value="ECO:0000314"/>
    <property type="project" value="PomBase"/>
</dbReference>
<dbReference type="GO" id="GO:0045292">
    <property type="term" value="P:mRNA cis splicing, via spliceosome"/>
    <property type="evidence" value="ECO:0000269"/>
    <property type="project" value="PomBase"/>
</dbReference>
<dbReference type="GO" id="GO:0000398">
    <property type="term" value="P:mRNA splicing, via spliceosome"/>
    <property type="evidence" value="ECO:0000318"/>
    <property type="project" value="GO_Central"/>
</dbReference>
<dbReference type="InterPro" id="IPR001748">
    <property type="entry name" value="BUD31"/>
</dbReference>
<dbReference type="PANTHER" id="PTHR19411:SF0">
    <property type="entry name" value="PROTEIN BUD31 HOMOLOG"/>
    <property type="match status" value="1"/>
</dbReference>
<dbReference type="PANTHER" id="PTHR19411">
    <property type="entry name" value="PROTEIN BUD31-RELATED"/>
    <property type="match status" value="1"/>
</dbReference>
<dbReference type="Pfam" id="PF01125">
    <property type="entry name" value="BUD31"/>
    <property type="match status" value="1"/>
</dbReference>
<dbReference type="PRINTS" id="PR00322">
    <property type="entry name" value="G10"/>
</dbReference>
<comment type="function">
    <text>Involved in mRNA splicing where it associates with cdc5 and the other cwf proteins as part of the spliceosome.</text>
</comment>
<comment type="subunit">
    <text evidence="1">Belongs to the 40S cdc5-associated complex (or cwf complex), a spliceosome sub-complex reminiscent of a late-stage spliceosome composed of the U2, U5 and U6 snRNAs and at least brr2, cdc5, cwf2/prp3, cwf3/syf1, cwf4/syf3, cwf5/ecm2, spp42/cwf6, cwf7/spf27, cwf8, cwf9, cwf10, cwf11, cwf12, prp45/cwf13, cwf14, cwf15, cwf16, cwf17, cwf18, cwf19, cwf20, cwf21, cwf22, cwf23, cwf24, cwf25, cwf26, cyp7/cwf27, cwf28, cwf29/ist3, lea1, msl1, prp5/cwf1, prp10, prp12/sap130, prp17, prp22, sap61, sap62, sap114, sap145, slu7, smb1, smd1, smd3, smf1, smg1 and syf2.</text>
</comment>
<comment type="subcellular location">
    <subcellularLocation>
        <location evidence="2">Nucleus</location>
    </subcellularLocation>
</comment>
<comment type="similarity">
    <text evidence="2">Belongs to the BUD31 (G10) family.</text>
</comment>
<proteinExistence type="evidence at protein level"/>
<evidence type="ECO:0000269" key="1">
    <source>
    </source>
</evidence>
<evidence type="ECO:0000305" key="2"/>
<evidence type="ECO:0007829" key="3">
    <source>
        <dbReference type="PDB" id="9ESI"/>
    </source>
</evidence>
<keyword id="KW-0002">3D-structure</keyword>
<keyword id="KW-0507">mRNA processing</keyword>
<keyword id="KW-0508">mRNA splicing</keyword>
<keyword id="KW-0539">Nucleus</keyword>
<keyword id="KW-1185">Reference proteome</keyword>
<protein>
    <recommendedName>
        <fullName>Pre-mRNA-splicing factor cwf14</fullName>
    </recommendedName>
    <alternativeName>
        <fullName>Complexed with cdc5 protein 14</fullName>
    </alternativeName>
</protein>